<keyword id="KW-0963">Cytoplasm</keyword>
<keyword id="KW-0808">Transferase</keyword>
<keyword id="KW-0819">tRNA processing</keyword>
<dbReference type="EC" id="2.8.1.-" evidence="1"/>
<dbReference type="EMBL" id="AM933173">
    <property type="protein sequence ID" value="CAR39758.1"/>
    <property type="molecule type" value="Genomic_DNA"/>
</dbReference>
<dbReference type="RefSeq" id="WP_001268011.1">
    <property type="nucleotide sequence ID" value="NC_011274.1"/>
</dbReference>
<dbReference type="SMR" id="B5RH04"/>
<dbReference type="KEGG" id="seg:SG3988"/>
<dbReference type="HOGENOM" id="CLU_132095_0_0_6"/>
<dbReference type="Proteomes" id="UP000008321">
    <property type="component" value="Chromosome"/>
</dbReference>
<dbReference type="GO" id="GO:1990228">
    <property type="term" value="C:sulfurtransferase complex"/>
    <property type="evidence" value="ECO:0007669"/>
    <property type="project" value="TreeGrafter"/>
</dbReference>
<dbReference type="GO" id="GO:0097163">
    <property type="term" value="F:sulfur carrier activity"/>
    <property type="evidence" value="ECO:0007669"/>
    <property type="project" value="TreeGrafter"/>
</dbReference>
<dbReference type="GO" id="GO:0016783">
    <property type="term" value="F:sulfurtransferase activity"/>
    <property type="evidence" value="ECO:0007669"/>
    <property type="project" value="UniProtKB-UniRule"/>
</dbReference>
<dbReference type="GO" id="GO:0002143">
    <property type="term" value="P:tRNA wobble position uridine thiolation"/>
    <property type="evidence" value="ECO:0007669"/>
    <property type="project" value="TreeGrafter"/>
</dbReference>
<dbReference type="FunFam" id="3.40.1260.10:FF:000001">
    <property type="entry name" value="Sulfurtransferase TusD"/>
    <property type="match status" value="1"/>
</dbReference>
<dbReference type="Gene3D" id="3.40.1260.10">
    <property type="entry name" value="DsrEFH-like"/>
    <property type="match status" value="1"/>
</dbReference>
<dbReference type="HAMAP" id="MF_00390">
    <property type="entry name" value="Thiourid_synth_D"/>
    <property type="match status" value="1"/>
</dbReference>
<dbReference type="InterPro" id="IPR027396">
    <property type="entry name" value="DsrEFH-like"/>
</dbReference>
<dbReference type="InterPro" id="IPR003787">
    <property type="entry name" value="Sulphur_relay_DsrE/F-like"/>
</dbReference>
<dbReference type="InterPro" id="IPR017463">
    <property type="entry name" value="Sulphur_relay_TusD/DsrE"/>
</dbReference>
<dbReference type="NCBIfam" id="NF001237">
    <property type="entry name" value="PRK00207.1"/>
    <property type="match status" value="1"/>
</dbReference>
<dbReference type="NCBIfam" id="TIGR03012">
    <property type="entry name" value="sulf_tusD_dsrE"/>
    <property type="match status" value="1"/>
</dbReference>
<dbReference type="PANTHER" id="PTHR34874">
    <property type="entry name" value="PROTEIN YCHN"/>
    <property type="match status" value="1"/>
</dbReference>
<dbReference type="PANTHER" id="PTHR34874:SF3">
    <property type="entry name" value="SULFURTRANSFERASE TUSD"/>
    <property type="match status" value="1"/>
</dbReference>
<dbReference type="Pfam" id="PF02635">
    <property type="entry name" value="DsrE"/>
    <property type="match status" value="1"/>
</dbReference>
<dbReference type="SUPFAM" id="SSF75169">
    <property type="entry name" value="DsrEFH-like"/>
    <property type="match status" value="1"/>
</dbReference>
<protein>
    <recommendedName>
        <fullName evidence="1">Sulfurtransferase TusD</fullName>
        <ecNumber evidence="1">2.8.1.-</ecNumber>
    </recommendedName>
    <alternativeName>
        <fullName evidence="1">tRNA 2-thiouridine synthesizing protein D</fullName>
    </alternativeName>
</protein>
<name>TUSD_SALG2</name>
<accession>B5RH04</accession>
<proteinExistence type="inferred from homology"/>
<evidence type="ECO:0000255" key="1">
    <source>
        <dbReference type="HAMAP-Rule" id="MF_00390"/>
    </source>
</evidence>
<feature type="chain" id="PRO_1000122870" description="Sulfurtransferase TusD">
    <location>
        <begin position="1"/>
        <end position="128"/>
    </location>
</feature>
<feature type="active site" description="Cysteine persulfide intermediate" evidence="1">
    <location>
        <position position="78"/>
    </location>
</feature>
<reference key="1">
    <citation type="journal article" date="2008" name="Genome Res.">
        <title>Comparative genome analysis of Salmonella enteritidis PT4 and Salmonella gallinarum 287/91 provides insights into evolutionary and host adaptation pathways.</title>
        <authorList>
            <person name="Thomson N.R."/>
            <person name="Clayton D.J."/>
            <person name="Windhorst D."/>
            <person name="Vernikos G."/>
            <person name="Davidson S."/>
            <person name="Churcher C."/>
            <person name="Quail M.A."/>
            <person name="Stevens M."/>
            <person name="Jones M.A."/>
            <person name="Watson M."/>
            <person name="Barron A."/>
            <person name="Layton A."/>
            <person name="Pickard D."/>
            <person name="Kingsley R.A."/>
            <person name="Bignell A."/>
            <person name="Clark L."/>
            <person name="Harris B."/>
            <person name="Ormond D."/>
            <person name="Abdellah Z."/>
            <person name="Brooks K."/>
            <person name="Cherevach I."/>
            <person name="Chillingworth T."/>
            <person name="Woodward J."/>
            <person name="Norberczak H."/>
            <person name="Lord A."/>
            <person name="Arrowsmith C."/>
            <person name="Jagels K."/>
            <person name="Moule S."/>
            <person name="Mungall K."/>
            <person name="Saunders M."/>
            <person name="Whitehead S."/>
            <person name="Chabalgoity J.A."/>
            <person name="Maskell D."/>
            <person name="Humphreys T."/>
            <person name="Roberts M."/>
            <person name="Barrow P.A."/>
            <person name="Dougan G."/>
            <person name="Parkhill J."/>
        </authorList>
    </citation>
    <scope>NUCLEOTIDE SEQUENCE [LARGE SCALE GENOMIC DNA]</scope>
    <source>
        <strain>287/91 / NCTC 13346</strain>
    </source>
</reference>
<gene>
    <name evidence="1" type="primary">tusD</name>
    <name type="ordered locus">SG3988</name>
</gene>
<organism>
    <name type="scientific">Salmonella gallinarum (strain 287/91 / NCTC 13346)</name>
    <dbReference type="NCBI Taxonomy" id="550538"/>
    <lineage>
        <taxon>Bacteria</taxon>
        <taxon>Pseudomonadati</taxon>
        <taxon>Pseudomonadota</taxon>
        <taxon>Gammaproteobacteria</taxon>
        <taxon>Enterobacterales</taxon>
        <taxon>Enterobacteriaceae</taxon>
        <taxon>Salmonella</taxon>
    </lineage>
</organism>
<comment type="function">
    <text evidence="1">Part of a sulfur-relay system required for 2-thiolation of 5-methylaminomethyl-2-thiouridine (mnm(5)s(2)U) at tRNA wobble positions. Accepts sulfur from TusA and transfers it in turn to TusE.</text>
</comment>
<comment type="subunit">
    <text evidence="1">Heterohexamer, formed by a dimer of trimers. The hexameric TusBCD complex contains 2 copies each of TusB, TusC and TusD. The TusBCD complex interacts with TusE.</text>
</comment>
<comment type="subcellular location">
    <subcellularLocation>
        <location evidence="1">Cytoplasm</location>
    </subcellularLocation>
</comment>
<comment type="similarity">
    <text evidence="1">Belongs to the DsrE/TusD family.</text>
</comment>
<sequence length="128" mass="13816">MRYAIMVTGPAYGTQQASSALQFAHALLNEGHELASVFFYREGVYNANLLTSPASDEYDLVRAWQKLNTQHGVALNICVAAALRRGIIDETEAGRLELPSANLQPGFTLSGLGALAEASLTCDRVVQF</sequence>